<organism>
    <name type="scientific">Burkholderia orbicola (strain MC0-3)</name>
    <dbReference type="NCBI Taxonomy" id="406425"/>
    <lineage>
        <taxon>Bacteria</taxon>
        <taxon>Pseudomonadati</taxon>
        <taxon>Pseudomonadota</taxon>
        <taxon>Betaproteobacteria</taxon>
        <taxon>Burkholderiales</taxon>
        <taxon>Burkholderiaceae</taxon>
        <taxon>Burkholderia</taxon>
        <taxon>Burkholderia cepacia complex</taxon>
        <taxon>Burkholderia orbicola</taxon>
    </lineage>
</organism>
<sequence length="64" mass="7032">MDARLLEIIVCPICKGPLHYDRAAQELICNADKLAYPIRDGIPVMLVDEARQTVEGTPVDPAGR</sequence>
<accession>B1JXF6</accession>
<gene>
    <name type="ordered locus">Bcenmc03_2570</name>
</gene>
<evidence type="ECO:0000255" key="1">
    <source>
        <dbReference type="HAMAP-Rule" id="MF_01187"/>
    </source>
</evidence>
<protein>
    <recommendedName>
        <fullName evidence="1">UPF0434 protein Bcenmc03_2570</fullName>
    </recommendedName>
</protein>
<proteinExistence type="inferred from homology"/>
<feature type="chain" id="PRO_1000138292" description="UPF0434 protein Bcenmc03_2570">
    <location>
        <begin position="1"/>
        <end position="64"/>
    </location>
</feature>
<dbReference type="EMBL" id="CP000958">
    <property type="protein sequence ID" value="ACA91731.1"/>
    <property type="molecule type" value="Genomic_DNA"/>
</dbReference>
<dbReference type="RefSeq" id="WP_006482216.1">
    <property type="nucleotide sequence ID" value="NC_010508.1"/>
</dbReference>
<dbReference type="SMR" id="B1JXF6"/>
<dbReference type="GeneID" id="83049358"/>
<dbReference type="KEGG" id="bcm:Bcenmc03_2570"/>
<dbReference type="HOGENOM" id="CLU_155659_3_0_4"/>
<dbReference type="Proteomes" id="UP000002169">
    <property type="component" value="Chromosome 1"/>
</dbReference>
<dbReference type="GO" id="GO:0005829">
    <property type="term" value="C:cytosol"/>
    <property type="evidence" value="ECO:0007669"/>
    <property type="project" value="TreeGrafter"/>
</dbReference>
<dbReference type="FunFam" id="2.20.25.10:FF:000002">
    <property type="entry name" value="UPF0434 protein YcaR"/>
    <property type="match status" value="1"/>
</dbReference>
<dbReference type="Gene3D" id="2.20.25.10">
    <property type="match status" value="1"/>
</dbReference>
<dbReference type="HAMAP" id="MF_01187">
    <property type="entry name" value="UPF0434"/>
    <property type="match status" value="1"/>
</dbReference>
<dbReference type="InterPro" id="IPR005651">
    <property type="entry name" value="Trm112-like"/>
</dbReference>
<dbReference type="PANTHER" id="PTHR33505:SF4">
    <property type="entry name" value="PROTEIN PREY, MITOCHONDRIAL"/>
    <property type="match status" value="1"/>
</dbReference>
<dbReference type="PANTHER" id="PTHR33505">
    <property type="entry name" value="ZGC:162634"/>
    <property type="match status" value="1"/>
</dbReference>
<dbReference type="Pfam" id="PF03966">
    <property type="entry name" value="Trm112p"/>
    <property type="match status" value="1"/>
</dbReference>
<dbReference type="SUPFAM" id="SSF158997">
    <property type="entry name" value="Trm112p-like"/>
    <property type="match status" value="1"/>
</dbReference>
<name>Y2570_BURO0</name>
<comment type="similarity">
    <text evidence="1">Belongs to the UPF0434 family.</text>
</comment>
<reference key="1">
    <citation type="submission" date="2008-02" db="EMBL/GenBank/DDBJ databases">
        <title>Complete sequence of chromosome 1 of Burkholderia cenocepacia MC0-3.</title>
        <authorList>
            <person name="Copeland A."/>
            <person name="Lucas S."/>
            <person name="Lapidus A."/>
            <person name="Barry K."/>
            <person name="Bruce D."/>
            <person name="Goodwin L."/>
            <person name="Glavina del Rio T."/>
            <person name="Dalin E."/>
            <person name="Tice H."/>
            <person name="Pitluck S."/>
            <person name="Chain P."/>
            <person name="Malfatti S."/>
            <person name="Shin M."/>
            <person name="Vergez L."/>
            <person name="Schmutz J."/>
            <person name="Larimer F."/>
            <person name="Land M."/>
            <person name="Hauser L."/>
            <person name="Kyrpides N."/>
            <person name="Mikhailova N."/>
            <person name="Tiedje J."/>
            <person name="Richardson P."/>
        </authorList>
    </citation>
    <scope>NUCLEOTIDE SEQUENCE [LARGE SCALE GENOMIC DNA]</scope>
    <source>
        <strain>MC0-3</strain>
    </source>
</reference>